<proteinExistence type="inferred from homology"/>
<keyword id="KW-1185">Reference proteome</keyword>
<keyword id="KW-0687">Ribonucleoprotein</keyword>
<keyword id="KW-0689">Ribosomal protein</keyword>
<keyword id="KW-0694">RNA-binding</keyword>
<keyword id="KW-0699">rRNA-binding</keyword>
<dbReference type="EMBL" id="CU207211">
    <property type="protein sequence ID" value="CAL63251.1"/>
    <property type="molecule type" value="Genomic_DNA"/>
</dbReference>
<dbReference type="SMR" id="A4G9R4"/>
<dbReference type="STRING" id="204773.HEAR3142"/>
<dbReference type="KEGG" id="har:HEAR3142"/>
<dbReference type="eggNOG" id="COG0522">
    <property type="taxonomic scope" value="Bacteria"/>
</dbReference>
<dbReference type="HOGENOM" id="CLU_092403_0_2_4"/>
<dbReference type="OrthoDB" id="9803672at2"/>
<dbReference type="Proteomes" id="UP000006697">
    <property type="component" value="Chromosome"/>
</dbReference>
<dbReference type="GO" id="GO:0015935">
    <property type="term" value="C:small ribosomal subunit"/>
    <property type="evidence" value="ECO:0007669"/>
    <property type="project" value="InterPro"/>
</dbReference>
<dbReference type="GO" id="GO:0019843">
    <property type="term" value="F:rRNA binding"/>
    <property type="evidence" value="ECO:0007669"/>
    <property type="project" value="UniProtKB-UniRule"/>
</dbReference>
<dbReference type="GO" id="GO:0003735">
    <property type="term" value="F:structural constituent of ribosome"/>
    <property type="evidence" value="ECO:0007669"/>
    <property type="project" value="InterPro"/>
</dbReference>
<dbReference type="GO" id="GO:0042274">
    <property type="term" value="P:ribosomal small subunit biogenesis"/>
    <property type="evidence" value="ECO:0007669"/>
    <property type="project" value="TreeGrafter"/>
</dbReference>
<dbReference type="GO" id="GO:0006412">
    <property type="term" value="P:translation"/>
    <property type="evidence" value="ECO:0007669"/>
    <property type="project" value="UniProtKB-UniRule"/>
</dbReference>
<dbReference type="CDD" id="cd00165">
    <property type="entry name" value="S4"/>
    <property type="match status" value="1"/>
</dbReference>
<dbReference type="FunFam" id="1.10.1050.10:FF:000001">
    <property type="entry name" value="30S ribosomal protein S4"/>
    <property type="match status" value="1"/>
</dbReference>
<dbReference type="FunFam" id="3.10.290.10:FF:000001">
    <property type="entry name" value="30S ribosomal protein S4"/>
    <property type="match status" value="1"/>
</dbReference>
<dbReference type="Gene3D" id="1.10.1050.10">
    <property type="entry name" value="Ribosomal Protein S4 Delta 41, Chain A, domain 1"/>
    <property type="match status" value="1"/>
</dbReference>
<dbReference type="Gene3D" id="3.10.290.10">
    <property type="entry name" value="RNA-binding S4 domain"/>
    <property type="match status" value="1"/>
</dbReference>
<dbReference type="HAMAP" id="MF_01306_B">
    <property type="entry name" value="Ribosomal_uS4_B"/>
    <property type="match status" value="1"/>
</dbReference>
<dbReference type="InterPro" id="IPR022801">
    <property type="entry name" value="Ribosomal_uS4"/>
</dbReference>
<dbReference type="InterPro" id="IPR005709">
    <property type="entry name" value="Ribosomal_uS4_bac-type"/>
</dbReference>
<dbReference type="InterPro" id="IPR001912">
    <property type="entry name" value="Ribosomal_uS4_N"/>
</dbReference>
<dbReference type="InterPro" id="IPR002942">
    <property type="entry name" value="S4_RNA-bd"/>
</dbReference>
<dbReference type="InterPro" id="IPR036986">
    <property type="entry name" value="S4_RNA-bd_sf"/>
</dbReference>
<dbReference type="NCBIfam" id="NF003717">
    <property type="entry name" value="PRK05327.1"/>
    <property type="match status" value="1"/>
</dbReference>
<dbReference type="NCBIfam" id="TIGR01017">
    <property type="entry name" value="rpsD_bact"/>
    <property type="match status" value="1"/>
</dbReference>
<dbReference type="PANTHER" id="PTHR11831">
    <property type="entry name" value="30S 40S RIBOSOMAL PROTEIN"/>
    <property type="match status" value="1"/>
</dbReference>
<dbReference type="PANTHER" id="PTHR11831:SF4">
    <property type="entry name" value="SMALL RIBOSOMAL SUBUNIT PROTEIN US4M"/>
    <property type="match status" value="1"/>
</dbReference>
<dbReference type="Pfam" id="PF00163">
    <property type="entry name" value="Ribosomal_S4"/>
    <property type="match status" value="1"/>
</dbReference>
<dbReference type="Pfam" id="PF01479">
    <property type="entry name" value="S4"/>
    <property type="match status" value="1"/>
</dbReference>
<dbReference type="SMART" id="SM01390">
    <property type="entry name" value="Ribosomal_S4"/>
    <property type="match status" value="1"/>
</dbReference>
<dbReference type="SMART" id="SM00363">
    <property type="entry name" value="S4"/>
    <property type="match status" value="1"/>
</dbReference>
<dbReference type="SUPFAM" id="SSF55174">
    <property type="entry name" value="Alpha-L RNA-binding motif"/>
    <property type="match status" value="1"/>
</dbReference>
<dbReference type="PROSITE" id="PS50889">
    <property type="entry name" value="S4"/>
    <property type="match status" value="1"/>
</dbReference>
<sequence>MARYIGPKAKLSRREGTDLFLKSARRSLDSKCKLDSKPGQHGRTSGARTSDYGNQLREKQKVKRMYGILERQFRRYFAEADRRKGNTGETLLKLLETRLDNVVYRMGFGSTRAEGRQLVSHKAFTVNGIVVNIASYQVKPGDIVAVREKSKKQVRIVEALSLAEQIGMPSWVAVDSKKMEGTFKSVPDRSEIAADVNESLIVELYSR</sequence>
<accession>A4G9R4</accession>
<reference key="1">
    <citation type="journal article" date="2007" name="PLoS Genet.">
        <title>A tale of two oxidation states: bacterial colonization of arsenic-rich environments.</title>
        <authorList>
            <person name="Muller D."/>
            <person name="Medigue C."/>
            <person name="Koechler S."/>
            <person name="Barbe V."/>
            <person name="Barakat M."/>
            <person name="Talla E."/>
            <person name="Bonnefoy V."/>
            <person name="Krin E."/>
            <person name="Arsene-Ploetze F."/>
            <person name="Carapito C."/>
            <person name="Chandler M."/>
            <person name="Cournoyer B."/>
            <person name="Cruveiller S."/>
            <person name="Dossat C."/>
            <person name="Duval S."/>
            <person name="Heymann M."/>
            <person name="Leize E."/>
            <person name="Lieutaud A."/>
            <person name="Lievremont D."/>
            <person name="Makita Y."/>
            <person name="Mangenot S."/>
            <person name="Nitschke W."/>
            <person name="Ortet P."/>
            <person name="Perdrial N."/>
            <person name="Schoepp B."/>
            <person name="Siguier P."/>
            <person name="Simeonova D.D."/>
            <person name="Rouy Z."/>
            <person name="Segurens B."/>
            <person name="Turlin E."/>
            <person name="Vallenet D."/>
            <person name="van Dorsselaer A."/>
            <person name="Weiss S."/>
            <person name="Weissenbach J."/>
            <person name="Lett M.-C."/>
            <person name="Danchin A."/>
            <person name="Bertin P.N."/>
        </authorList>
    </citation>
    <scope>NUCLEOTIDE SEQUENCE [LARGE SCALE GENOMIC DNA]</scope>
    <source>
        <strain>ULPAs1</strain>
    </source>
</reference>
<gene>
    <name evidence="1" type="primary">rpsD</name>
    <name type="ordered locus">HEAR3142</name>
</gene>
<protein>
    <recommendedName>
        <fullName evidence="1">Small ribosomal subunit protein uS4</fullName>
    </recommendedName>
    <alternativeName>
        <fullName evidence="3">30S ribosomal protein S4</fullName>
    </alternativeName>
</protein>
<feature type="chain" id="PRO_0000322305" description="Small ribosomal subunit protein uS4">
    <location>
        <begin position="1"/>
        <end position="207"/>
    </location>
</feature>
<feature type="domain" description="S4 RNA-binding" evidence="1">
    <location>
        <begin position="97"/>
        <end position="157"/>
    </location>
</feature>
<feature type="region of interest" description="Disordered" evidence="2">
    <location>
        <begin position="31"/>
        <end position="56"/>
    </location>
</feature>
<feature type="compositionally biased region" description="Polar residues" evidence="2">
    <location>
        <begin position="42"/>
        <end position="53"/>
    </location>
</feature>
<organism>
    <name type="scientific">Herminiimonas arsenicoxydans</name>
    <dbReference type="NCBI Taxonomy" id="204773"/>
    <lineage>
        <taxon>Bacteria</taxon>
        <taxon>Pseudomonadati</taxon>
        <taxon>Pseudomonadota</taxon>
        <taxon>Betaproteobacteria</taxon>
        <taxon>Burkholderiales</taxon>
        <taxon>Oxalobacteraceae</taxon>
        <taxon>Herminiimonas</taxon>
    </lineage>
</organism>
<name>RS4_HERAR</name>
<comment type="function">
    <text evidence="1">One of the primary rRNA binding proteins, it binds directly to 16S rRNA where it nucleates assembly of the body of the 30S subunit.</text>
</comment>
<comment type="function">
    <text evidence="1">With S5 and S12 plays an important role in translational accuracy.</text>
</comment>
<comment type="subunit">
    <text evidence="1">Part of the 30S ribosomal subunit. Contacts protein S5. The interaction surface between S4 and S5 is involved in control of translational fidelity.</text>
</comment>
<comment type="similarity">
    <text evidence="1">Belongs to the universal ribosomal protein uS4 family.</text>
</comment>
<evidence type="ECO:0000255" key="1">
    <source>
        <dbReference type="HAMAP-Rule" id="MF_01306"/>
    </source>
</evidence>
<evidence type="ECO:0000256" key="2">
    <source>
        <dbReference type="SAM" id="MobiDB-lite"/>
    </source>
</evidence>
<evidence type="ECO:0000305" key="3"/>